<comment type="catalytic activity">
    <reaction>
        <text>urea + 2 H2O + H(+) = hydrogencarbonate + 2 NH4(+)</text>
        <dbReference type="Rhea" id="RHEA:20557"/>
        <dbReference type="ChEBI" id="CHEBI:15377"/>
        <dbReference type="ChEBI" id="CHEBI:15378"/>
        <dbReference type="ChEBI" id="CHEBI:16199"/>
        <dbReference type="ChEBI" id="CHEBI:17544"/>
        <dbReference type="ChEBI" id="CHEBI:28938"/>
        <dbReference type="EC" id="3.5.1.5"/>
    </reaction>
</comment>
<comment type="cofactor">
    <cofactor evidence="3">
        <name>Ni cation</name>
        <dbReference type="ChEBI" id="CHEBI:25516"/>
    </cofactor>
    <text evidence="3">Binds 2 nickel ions per subunit.</text>
</comment>
<comment type="pathway">
    <text>Nitrogen metabolism; urea degradation; CO(2) and NH(3) from urea (urease route): step 1/1.</text>
</comment>
<comment type="subunit">
    <text evidence="1">Heterotrimer of UreA (gamma), UreB (beta) and UreC (alpha) subunits. Three heterotrimers associate to form the active enzyme (By similarity).</text>
</comment>
<comment type="subcellular location">
    <subcellularLocation>
        <location evidence="1">Cytoplasm</location>
    </subcellularLocation>
</comment>
<comment type="induction">
    <text evidence="2">The probable operon is induced by urea.</text>
</comment>
<comment type="similarity">
    <text evidence="3">Belongs to the metallo-dependent hydrolases superfamily. Urease alpha subunit family.</text>
</comment>
<dbReference type="EC" id="3.5.1.5"/>
<dbReference type="EMBL" id="L03307">
    <property type="protein sequence ID" value="AAA24747.1"/>
    <property type="molecule type" value="Genomic_DNA"/>
</dbReference>
<dbReference type="SMR" id="Q03284"/>
<dbReference type="BindingDB" id="Q03284"/>
<dbReference type="ChEMBL" id="CHEMBL2364683"/>
<dbReference type="DrugCentral" id="Q03284"/>
<dbReference type="UniPathway" id="UPA00258">
    <property type="reaction ID" value="UER00370"/>
</dbReference>
<dbReference type="GO" id="GO:0005737">
    <property type="term" value="C:cytoplasm"/>
    <property type="evidence" value="ECO:0007669"/>
    <property type="project" value="UniProtKB-SubCell"/>
</dbReference>
<dbReference type="GO" id="GO:0046872">
    <property type="term" value="F:metal ion binding"/>
    <property type="evidence" value="ECO:0007669"/>
    <property type="project" value="UniProtKB-KW"/>
</dbReference>
<dbReference type="GO" id="GO:0009039">
    <property type="term" value="F:urease activity"/>
    <property type="evidence" value="ECO:0007669"/>
    <property type="project" value="UniProtKB-EC"/>
</dbReference>
<dbReference type="GO" id="GO:0043419">
    <property type="term" value="P:urea catabolic process"/>
    <property type="evidence" value="ECO:0007669"/>
    <property type="project" value="UniProtKB-UniPathway"/>
</dbReference>
<dbReference type="Gene3D" id="2.30.40.10">
    <property type="entry name" value="Urease, subunit C, domain 1"/>
    <property type="match status" value="1"/>
</dbReference>
<dbReference type="InterPro" id="IPR011059">
    <property type="entry name" value="Metal-dep_hydrolase_composite"/>
</dbReference>
<dbReference type="InterPro" id="IPR011612">
    <property type="entry name" value="Urease_alpha_N_dom"/>
</dbReference>
<dbReference type="Pfam" id="PF00449">
    <property type="entry name" value="Urease_alpha"/>
    <property type="match status" value="1"/>
</dbReference>
<dbReference type="SUPFAM" id="SSF51338">
    <property type="entry name" value="Composite domain of metallo-dependent hydrolases"/>
    <property type="match status" value="1"/>
</dbReference>
<organism>
    <name type="scientific">Escherichia coli</name>
    <dbReference type="NCBI Taxonomy" id="562"/>
    <lineage>
        <taxon>Bacteria</taxon>
        <taxon>Pseudomonadati</taxon>
        <taxon>Pseudomonadota</taxon>
        <taxon>Gammaproteobacteria</taxon>
        <taxon>Enterobacterales</taxon>
        <taxon>Enterobacteriaceae</taxon>
        <taxon>Escherichia</taxon>
    </lineage>
</organism>
<proteinExistence type="evidence at transcript level"/>
<accession>Q03284</accession>
<reference key="1">
    <citation type="journal article" date="1993" name="J. Bacteriol.">
        <title>Characterization of a plasmid-encoded urease gene cluster found in members of the family Enterobacteriaceae.</title>
        <authorList>
            <person name="D'Orazio S.E."/>
            <person name="Collins C.M."/>
        </authorList>
    </citation>
    <scope>NUCLEOTIDE SEQUENCE [GENOMIC DNA]</scope>
    <scope>INDUCTION</scope>
    <source>
        <strain>1440 / UPEC</strain>
    </source>
</reference>
<keyword id="KW-0963">Cytoplasm</keyword>
<keyword id="KW-0378">Hydrolase</keyword>
<keyword id="KW-0479">Metal-binding</keyword>
<keyword id="KW-0533">Nickel</keyword>
<keyword id="KW-0614">Plasmid</keyword>
<evidence type="ECO:0000250" key="1"/>
<evidence type="ECO:0000269" key="2">
    <source>
    </source>
</evidence>
<evidence type="ECO:0000305" key="3"/>
<feature type="chain" id="PRO_0000067541" description="Urease subunit alpha">
    <location>
        <begin position="1"/>
        <end position="30" status="greater than"/>
    </location>
</feature>
<feature type="non-terminal residue">
    <location>
        <position position="30"/>
    </location>
</feature>
<gene>
    <name type="primary">ureC</name>
</gene>
<name>URE1_ECOLX</name>
<sequence length="30" mass="3419">MKTISRQAYADMFGPTTGDRLRLADTELFL</sequence>
<geneLocation type="plasmid"/>
<protein>
    <recommendedName>
        <fullName>Urease subunit alpha</fullName>
        <ecNumber>3.5.1.5</ecNumber>
    </recommendedName>
    <alternativeName>
        <fullName>Urea amidohydrolase subunit alpha</fullName>
    </alternativeName>
</protein>